<proteinExistence type="inferred from homology"/>
<comment type="function">
    <text evidence="1">The glycine cleavage system catalyzes the degradation of glycine. The P protein binds the alpha-amino group of glycine through its pyridoxal phosphate cofactor; CO(2) is released and the remaining methylamine moiety is then transferred to the lipoamide cofactor of the H protein.</text>
</comment>
<comment type="catalytic activity">
    <reaction evidence="1">
        <text>N(6)-[(R)-lipoyl]-L-lysyl-[glycine-cleavage complex H protein] + glycine + H(+) = N(6)-[(R)-S(8)-aminomethyldihydrolipoyl]-L-lysyl-[glycine-cleavage complex H protein] + CO2</text>
        <dbReference type="Rhea" id="RHEA:24304"/>
        <dbReference type="Rhea" id="RHEA-COMP:10494"/>
        <dbReference type="Rhea" id="RHEA-COMP:10495"/>
        <dbReference type="ChEBI" id="CHEBI:15378"/>
        <dbReference type="ChEBI" id="CHEBI:16526"/>
        <dbReference type="ChEBI" id="CHEBI:57305"/>
        <dbReference type="ChEBI" id="CHEBI:83099"/>
        <dbReference type="ChEBI" id="CHEBI:83143"/>
        <dbReference type="EC" id="1.4.4.2"/>
    </reaction>
</comment>
<comment type="cofactor">
    <cofactor evidence="1">
        <name>pyridoxal 5'-phosphate</name>
        <dbReference type="ChEBI" id="CHEBI:597326"/>
    </cofactor>
</comment>
<comment type="subunit">
    <text evidence="1">The glycine cleavage system is composed of four proteins: P, T, L and H.</text>
</comment>
<comment type="similarity">
    <text evidence="1">Belongs to the GcvP family.</text>
</comment>
<dbReference type="EC" id="1.4.4.2" evidence="1"/>
<dbReference type="EMBL" id="CP000264">
    <property type="protein sequence ID" value="ABD56539.1"/>
    <property type="molecule type" value="Genomic_DNA"/>
</dbReference>
<dbReference type="RefSeq" id="WP_011456739.1">
    <property type="nucleotide sequence ID" value="NC_007802.1"/>
</dbReference>
<dbReference type="SMR" id="Q28L73"/>
<dbReference type="STRING" id="290400.Jann_3622"/>
<dbReference type="KEGG" id="jan:Jann_3622"/>
<dbReference type="eggNOG" id="COG0403">
    <property type="taxonomic scope" value="Bacteria"/>
</dbReference>
<dbReference type="eggNOG" id="COG1003">
    <property type="taxonomic scope" value="Bacteria"/>
</dbReference>
<dbReference type="HOGENOM" id="CLU_004620_3_2_5"/>
<dbReference type="OrthoDB" id="9801272at2"/>
<dbReference type="Proteomes" id="UP000008326">
    <property type="component" value="Chromosome"/>
</dbReference>
<dbReference type="GO" id="GO:0005829">
    <property type="term" value="C:cytosol"/>
    <property type="evidence" value="ECO:0007669"/>
    <property type="project" value="TreeGrafter"/>
</dbReference>
<dbReference type="GO" id="GO:0005960">
    <property type="term" value="C:glycine cleavage complex"/>
    <property type="evidence" value="ECO:0007669"/>
    <property type="project" value="TreeGrafter"/>
</dbReference>
<dbReference type="GO" id="GO:0016594">
    <property type="term" value="F:glycine binding"/>
    <property type="evidence" value="ECO:0007669"/>
    <property type="project" value="TreeGrafter"/>
</dbReference>
<dbReference type="GO" id="GO:0004375">
    <property type="term" value="F:glycine dehydrogenase (decarboxylating) activity"/>
    <property type="evidence" value="ECO:0007669"/>
    <property type="project" value="UniProtKB-EC"/>
</dbReference>
<dbReference type="GO" id="GO:0030170">
    <property type="term" value="F:pyridoxal phosphate binding"/>
    <property type="evidence" value="ECO:0007669"/>
    <property type="project" value="TreeGrafter"/>
</dbReference>
<dbReference type="GO" id="GO:0019464">
    <property type="term" value="P:glycine decarboxylation via glycine cleavage system"/>
    <property type="evidence" value="ECO:0007669"/>
    <property type="project" value="UniProtKB-UniRule"/>
</dbReference>
<dbReference type="CDD" id="cd00613">
    <property type="entry name" value="GDC-P"/>
    <property type="match status" value="2"/>
</dbReference>
<dbReference type="FunFam" id="3.40.640.10:FF:000005">
    <property type="entry name" value="Glycine dehydrogenase (decarboxylating), mitochondrial"/>
    <property type="match status" value="1"/>
</dbReference>
<dbReference type="FunFam" id="3.40.640.10:FF:000007">
    <property type="entry name" value="glycine dehydrogenase (Decarboxylating), mitochondrial"/>
    <property type="match status" value="1"/>
</dbReference>
<dbReference type="Gene3D" id="3.90.1150.10">
    <property type="entry name" value="Aspartate Aminotransferase, domain 1"/>
    <property type="match status" value="2"/>
</dbReference>
<dbReference type="Gene3D" id="3.40.640.10">
    <property type="entry name" value="Type I PLP-dependent aspartate aminotransferase-like (Major domain)"/>
    <property type="match status" value="2"/>
</dbReference>
<dbReference type="HAMAP" id="MF_00711">
    <property type="entry name" value="GcvP"/>
    <property type="match status" value="1"/>
</dbReference>
<dbReference type="InterPro" id="IPR003437">
    <property type="entry name" value="GcvP"/>
</dbReference>
<dbReference type="InterPro" id="IPR049316">
    <property type="entry name" value="GDC-P_C"/>
</dbReference>
<dbReference type="InterPro" id="IPR049315">
    <property type="entry name" value="GDC-P_N"/>
</dbReference>
<dbReference type="InterPro" id="IPR020581">
    <property type="entry name" value="GDC_P"/>
</dbReference>
<dbReference type="InterPro" id="IPR015424">
    <property type="entry name" value="PyrdxlP-dep_Trfase"/>
</dbReference>
<dbReference type="InterPro" id="IPR015421">
    <property type="entry name" value="PyrdxlP-dep_Trfase_major"/>
</dbReference>
<dbReference type="InterPro" id="IPR015422">
    <property type="entry name" value="PyrdxlP-dep_Trfase_small"/>
</dbReference>
<dbReference type="NCBIfam" id="TIGR00461">
    <property type="entry name" value="gcvP"/>
    <property type="match status" value="1"/>
</dbReference>
<dbReference type="NCBIfam" id="NF001696">
    <property type="entry name" value="PRK00451.1"/>
    <property type="match status" value="1"/>
</dbReference>
<dbReference type="PANTHER" id="PTHR11773:SF1">
    <property type="entry name" value="GLYCINE DEHYDROGENASE (DECARBOXYLATING), MITOCHONDRIAL"/>
    <property type="match status" value="1"/>
</dbReference>
<dbReference type="PANTHER" id="PTHR11773">
    <property type="entry name" value="GLYCINE DEHYDROGENASE, DECARBOXYLATING"/>
    <property type="match status" value="1"/>
</dbReference>
<dbReference type="Pfam" id="PF21478">
    <property type="entry name" value="GcvP2_C"/>
    <property type="match status" value="1"/>
</dbReference>
<dbReference type="Pfam" id="PF02347">
    <property type="entry name" value="GDC-P"/>
    <property type="match status" value="2"/>
</dbReference>
<dbReference type="SUPFAM" id="SSF53383">
    <property type="entry name" value="PLP-dependent transferases"/>
    <property type="match status" value="2"/>
</dbReference>
<protein>
    <recommendedName>
        <fullName evidence="1">Glycine dehydrogenase (decarboxylating)</fullName>
        <ecNumber evidence="1">1.4.4.2</ecNumber>
    </recommendedName>
    <alternativeName>
        <fullName evidence="1">Glycine cleavage system P-protein</fullName>
    </alternativeName>
    <alternativeName>
        <fullName evidence="1">Glycine decarboxylase</fullName>
    </alternativeName>
    <alternativeName>
        <fullName evidence="1">Glycine dehydrogenase (aminomethyl-transferring)</fullName>
    </alternativeName>
</protein>
<name>GCSP_JANSC</name>
<gene>
    <name evidence="1" type="primary">gcvP</name>
    <name type="ordered locus">Jann_3622</name>
</gene>
<feature type="chain" id="PRO_1000045585" description="Glycine dehydrogenase (decarboxylating)">
    <location>
        <begin position="1"/>
        <end position="943"/>
    </location>
</feature>
<feature type="modified residue" description="N6-(pyridoxal phosphate)lysine" evidence="1">
    <location>
        <position position="695"/>
    </location>
</feature>
<reference key="1">
    <citation type="submission" date="2006-02" db="EMBL/GenBank/DDBJ databases">
        <title>Complete sequence of chromosome of Jannaschia sp. CCS1.</title>
        <authorList>
            <consortium name="US DOE Joint Genome Institute"/>
            <person name="Copeland A."/>
            <person name="Lucas S."/>
            <person name="Lapidus A."/>
            <person name="Barry K."/>
            <person name="Detter J.C."/>
            <person name="Glavina del Rio T."/>
            <person name="Hammon N."/>
            <person name="Israni S."/>
            <person name="Pitluck S."/>
            <person name="Brettin T."/>
            <person name="Bruce D."/>
            <person name="Han C."/>
            <person name="Tapia R."/>
            <person name="Gilna P."/>
            <person name="Chertkov O."/>
            <person name="Saunders E."/>
            <person name="Schmutz J."/>
            <person name="Larimer F."/>
            <person name="Land M."/>
            <person name="Kyrpides N."/>
            <person name="Lykidis A."/>
            <person name="Moran M.A."/>
            <person name="Belas R."/>
            <person name="Ye W."/>
            <person name="Buchan A."/>
            <person name="Gonzalez J.M."/>
            <person name="Schell M.A."/>
            <person name="Richardson P."/>
        </authorList>
    </citation>
    <scope>NUCLEOTIDE SEQUENCE [LARGE SCALE GENOMIC DNA]</scope>
    <source>
        <strain>CCS1</strain>
    </source>
</reference>
<evidence type="ECO:0000255" key="1">
    <source>
        <dbReference type="HAMAP-Rule" id="MF_00711"/>
    </source>
</evidence>
<organism>
    <name type="scientific">Jannaschia sp. (strain CCS1)</name>
    <dbReference type="NCBI Taxonomy" id="290400"/>
    <lineage>
        <taxon>Bacteria</taxon>
        <taxon>Pseudomonadati</taxon>
        <taxon>Pseudomonadota</taxon>
        <taxon>Alphaproteobacteria</taxon>
        <taxon>Rhodobacterales</taxon>
        <taxon>Roseobacteraceae</taxon>
        <taxon>Jannaschia</taxon>
    </lineage>
</organism>
<keyword id="KW-0560">Oxidoreductase</keyword>
<keyword id="KW-0663">Pyridoxal phosphate</keyword>
<keyword id="KW-1185">Reference proteome</keyword>
<accession>Q28L73</accession>
<sequence>MPWTTTDYDPTDFANRRHIGPSPAEMAEMLEFVGADSLDALIDDTVPASIRQAGALDWAAMSEAELLDHMRAIADKNKPMVSMIGQGYFGTHTPPAIQRNVLENPAWYTAYTPYQPEIAQGRLEALLNFQTMVADLTGLPVANASLLDEATAAAEAMVMAQRASKSKARTFFVDETCHPQTIAVIQTRAEPLGIEVRVGDAAMLDADAVFGAIFQYPCTFGGLRDPSAQIEALHEAKAIAVVATDLLALTVLKEPGAMGADIAVGSAQRFGVPLGYGGPHAAFMSCRDALKRSLPGRIVGVSVDSHGQNAYRLSLQTREQHIRREKATSNVCTAQALLAVMASFYAVFHGPKGLRAIAERVHMRAVRLAASLSAGGFAPDNDTFFDTLTVHVGDKQSRIMAAAVARGINLRDVGADRIGISVDEVTTDAHIEAVCRAFGVLKAPAPKAPAISDDLLRMSDYLTHPIFHMNRAESEMMRYMRRLSDRDLALDRAMIPLGSCTMKLNAAVEMMPITWPEFGNLHPFAPADQAEGYAEMLEDLSAKLCDITGYDAMSMQPNSGAQGEYAGLLTIAAYHRARGETRNICLIPVSAHGTNPASAQMAGMQVVVVKSQEDGDIDLVDFRAKAEAAGDKLAACMITYPSTHGVFEESVREVCEITHELGGQVYLDGANLNAMVGLSKPGELGADVSHLNLHKTFCIPHGGGGPGMGPIGVKAHLAPHLPGHPETGGTQGPVSAAPYGSASILPISYAYVHLMGGSGLTQATKVAILGANYIAKRLEGDYGVLFKGKTGRVAHECILDTRPFAEAGITVDDIAKRLMDHGFHAPTMSWPVAGTLMVEPTESETKAELDRFITAMQAIRAEIAEVEDGLPAGDSPLHHAPHTMEDLVRDWDRAYTREQGCFPPGAFRVDKYWPPVNRVDNVAGDRNLICTCPPLEEYLDAAE</sequence>